<accession>Q88WI3</accession>
<accession>F9UP20</accession>
<evidence type="ECO:0000255" key="1">
    <source>
        <dbReference type="HAMAP-Rule" id="MF_00211"/>
    </source>
</evidence>
<proteinExistence type="inferred from homology"/>
<organism>
    <name type="scientific">Lactiplantibacillus plantarum (strain ATCC BAA-793 / NCIMB 8826 / WCFS1)</name>
    <name type="common">Lactobacillus plantarum</name>
    <dbReference type="NCBI Taxonomy" id="220668"/>
    <lineage>
        <taxon>Bacteria</taxon>
        <taxon>Bacillati</taxon>
        <taxon>Bacillota</taxon>
        <taxon>Bacilli</taxon>
        <taxon>Lactobacillales</taxon>
        <taxon>Lactobacillaceae</taxon>
        <taxon>Lactiplantibacillus</taxon>
    </lineage>
</organism>
<reference key="1">
    <citation type="journal article" date="2003" name="Proc. Natl. Acad. Sci. U.S.A.">
        <title>Complete genome sequence of Lactobacillus plantarum WCFS1.</title>
        <authorList>
            <person name="Kleerebezem M."/>
            <person name="Boekhorst J."/>
            <person name="van Kranenburg R."/>
            <person name="Molenaar D."/>
            <person name="Kuipers O.P."/>
            <person name="Leer R."/>
            <person name="Tarchini R."/>
            <person name="Peters S.A."/>
            <person name="Sandbrink H.M."/>
            <person name="Fiers M.W.E.J."/>
            <person name="Stiekema W."/>
            <person name="Klein Lankhorst R.M."/>
            <person name="Bron P.A."/>
            <person name="Hoffer S.M."/>
            <person name="Nierop Groot M.N."/>
            <person name="Kerkhoven R."/>
            <person name="De Vries M."/>
            <person name="Ursing B."/>
            <person name="De Vos W.M."/>
            <person name="Siezen R.J."/>
        </authorList>
    </citation>
    <scope>NUCLEOTIDE SEQUENCE [LARGE SCALE GENOMIC DNA]</scope>
    <source>
        <strain>ATCC BAA-793 / NCIMB 8826 / WCFS1</strain>
    </source>
</reference>
<reference key="2">
    <citation type="journal article" date="2012" name="J. Bacteriol.">
        <title>Complete resequencing and reannotation of the Lactobacillus plantarum WCFS1 genome.</title>
        <authorList>
            <person name="Siezen R.J."/>
            <person name="Francke C."/>
            <person name="Renckens B."/>
            <person name="Boekhorst J."/>
            <person name="Wels M."/>
            <person name="Kleerebezem M."/>
            <person name="van Hijum S.A."/>
        </authorList>
    </citation>
    <scope>NUCLEOTIDE SEQUENCE [LARGE SCALE GENOMIC DNA]</scope>
    <scope>GENOME REANNOTATION</scope>
    <source>
        <strain>ATCC BAA-793 / NCIMB 8826 / WCFS1</strain>
    </source>
</reference>
<protein>
    <recommendedName>
        <fullName evidence="1">Anthranilate phosphoribosyltransferase</fullName>
        <ecNumber evidence="1">2.4.2.18</ecNumber>
    </recommendedName>
</protein>
<feature type="chain" id="PRO_0000154453" description="Anthranilate phosphoribosyltransferase">
    <location>
        <begin position="1"/>
        <end position="339"/>
    </location>
</feature>
<feature type="binding site" evidence="1">
    <location>
        <position position="79"/>
    </location>
    <ligand>
        <name>5-phospho-alpha-D-ribose 1-diphosphate</name>
        <dbReference type="ChEBI" id="CHEBI:58017"/>
    </ligand>
</feature>
<feature type="binding site" evidence="1">
    <location>
        <position position="79"/>
    </location>
    <ligand>
        <name>anthranilate</name>
        <dbReference type="ChEBI" id="CHEBI:16567"/>
        <label>1</label>
    </ligand>
</feature>
<feature type="binding site" evidence="1">
    <location>
        <begin position="82"/>
        <end position="83"/>
    </location>
    <ligand>
        <name>5-phospho-alpha-D-ribose 1-diphosphate</name>
        <dbReference type="ChEBI" id="CHEBI:58017"/>
    </ligand>
</feature>
<feature type="binding site" evidence="1">
    <location>
        <position position="87"/>
    </location>
    <ligand>
        <name>5-phospho-alpha-D-ribose 1-diphosphate</name>
        <dbReference type="ChEBI" id="CHEBI:58017"/>
    </ligand>
</feature>
<feature type="binding site" evidence="1">
    <location>
        <begin position="89"/>
        <end position="92"/>
    </location>
    <ligand>
        <name>5-phospho-alpha-D-ribose 1-diphosphate</name>
        <dbReference type="ChEBI" id="CHEBI:58017"/>
    </ligand>
</feature>
<feature type="binding site" evidence="1">
    <location>
        <position position="91"/>
    </location>
    <ligand>
        <name>Mg(2+)</name>
        <dbReference type="ChEBI" id="CHEBI:18420"/>
        <label>1</label>
    </ligand>
</feature>
<feature type="binding site" evidence="1">
    <location>
        <begin position="107"/>
        <end position="115"/>
    </location>
    <ligand>
        <name>5-phospho-alpha-D-ribose 1-diphosphate</name>
        <dbReference type="ChEBI" id="CHEBI:58017"/>
    </ligand>
</feature>
<feature type="binding site" evidence="1">
    <location>
        <position position="110"/>
    </location>
    <ligand>
        <name>anthranilate</name>
        <dbReference type="ChEBI" id="CHEBI:16567"/>
        <label>1</label>
    </ligand>
</feature>
<feature type="binding site" evidence="1">
    <location>
        <position position="119"/>
    </location>
    <ligand>
        <name>5-phospho-alpha-D-ribose 1-diphosphate</name>
        <dbReference type="ChEBI" id="CHEBI:58017"/>
    </ligand>
</feature>
<feature type="binding site" evidence="1">
    <location>
        <position position="165"/>
    </location>
    <ligand>
        <name>anthranilate</name>
        <dbReference type="ChEBI" id="CHEBI:16567"/>
        <label>2</label>
    </ligand>
</feature>
<feature type="binding site" evidence="1">
    <location>
        <position position="224"/>
    </location>
    <ligand>
        <name>Mg(2+)</name>
        <dbReference type="ChEBI" id="CHEBI:18420"/>
        <label>2</label>
    </ligand>
</feature>
<feature type="binding site" evidence="1">
    <location>
        <position position="225"/>
    </location>
    <ligand>
        <name>Mg(2+)</name>
        <dbReference type="ChEBI" id="CHEBI:18420"/>
        <label>1</label>
    </ligand>
</feature>
<feature type="binding site" evidence="1">
    <location>
        <position position="225"/>
    </location>
    <ligand>
        <name>Mg(2+)</name>
        <dbReference type="ChEBI" id="CHEBI:18420"/>
        <label>2</label>
    </ligand>
</feature>
<keyword id="KW-0028">Amino-acid biosynthesis</keyword>
<keyword id="KW-0057">Aromatic amino acid biosynthesis</keyword>
<keyword id="KW-0328">Glycosyltransferase</keyword>
<keyword id="KW-0460">Magnesium</keyword>
<keyword id="KW-0479">Metal-binding</keyword>
<keyword id="KW-1185">Reference proteome</keyword>
<keyword id="KW-0808">Transferase</keyword>
<keyword id="KW-0822">Tryptophan biosynthesis</keyword>
<gene>
    <name evidence="1" type="primary">trpD</name>
    <name type="ordered locus">lp_1654</name>
</gene>
<dbReference type="EC" id="2.4.2.18" evidence="1"/>
<dbReference type="EMBL" id="AL935263">
    <property type="protein sequence ID" value="CCC78959.1"/>
    <property type="molecule type" value="Genomic_DNA"/>
</dbReference>
<dbReference type="RefSeq" id="WP_011101489.1">
    <property type="nucleotide sequence ID" value="NC_004567.2"/>
</dbReference>
<dbReference type="RefSeq" id="YP_004889473.1">
    <property type="nucleotide sequence ID" value="NC_004567.2"/>
</dbReference>
<dbReference type="SMR" id="Q88WI3"/>
<dbReference type="STRING" id="220668.lp_1654"/>
<dbReference type="EnsemblBacteria" id="CCC78959">
    <property type="protein sequence ID" value="CCC78959"/>
    <property type="gene ID" value="lp_1654"/>
</dbReference>
<dbReference type="KEGG" id="lpl:lp_1654"/>
<dbReference type="PATRIC" id="fig|220668.9.peg.1395"/>
<dbReference type="eggNOG" id="COG0547">
    <property type="taxonomic scope" value="Bacteria"/>
</dbReference>
<dbReference type="HOGENOM" id="CLU_034315_2_1_9"/>
<dbReference type="OrthoDB" id="9806430at2"/>
<dbReference type="PhylomeDB" id="Q88WI3"/>
<dbReference type="UniPathway" id="UPA00035">
    <property type="reaction ID" value="UER00041"/>
</dbReference>
<dbReference type="Proteomes" id="UP000000432">
    <property type="component" value="Chromosome"/>
</dbReference>
<dbReference type="GO" id="GO:0005829">
    <property type="term" value="C:cytosol"/>
    <property type="evidence" value="ECO:0007669"/>
    <property type="project" value="TreeGrafter"/>
</dbReference>
<dbReference type="GO" id="GO:0004048">
    <property type="term" value="F:anthranilate phosphoribosyltransferase activity"/>
    <property type="evidence" value="ECO:0007669"/>
    <property type="project" value="UniProtKB-UniRule"/>
</dbReference>
<dbReference type="GO" id="GO:0000287">
    <property type="term" value="F:magnesium ion binding"/>
    <property type="evidence" value="ECO:0007669"/>
    <property type="project" value="UniProtKB-UniRule"/>
</dbReference>
<dbReference type="GO" id="GO:0000162">
    <property type="term" value="P:L-tryptophan biosynthetic process"/>
    <property type="evidence" value="ECO:0007669"/>
    <property type="project" value="UniProtKB-UniRule"/>
</dbReference>
<dbReference type="FunFam" id="3.40.1030.10:FF:000002">
    <property type="entry name" value="Anthranilate phosphoribosyltransferase"/>
    <property type="match status" value="1"/>
</dbReference>
<dbReference type="Gene3D" id="3.40.1030.10">
    <property type="entry name" value="Nucleoside phosphorylase/phosphoribosyltransferase catalytic domain"/>
    <property type="match status" value="1"/>
</dbReference>
<dbReference type="Gene3D" id="1.20.970.10">
    <property type="entry name" value="Transferase, Pyrimidine Nucleoside Phosphorylase, Chain C"/>
    <property type="match status" value="1"/>
</dbReference>
<dbReference type="HAMAP" id="MF_00211">
    <property type="entry name" value="TrpD"/>
    <property type="match status" value="1"/>
</dbReference>
<dbReference type="InterPro" id="IPR005940">
    <property type="entry name" value="Anthranilate_Pribosyl_Tfrase"/>
</dbReference>
<dbReference type="InterPro" id="IPR000312">
    <property type="entry name" value="Glycosyl_Trfase_fam3"/>
</dbReference>
<dbReference type="InterPro" id="IPR017459">
    <property type="entry name" value="Glycosyl_Trfase_fam3_N_dom"/>
</dbReference>
<dbReference type="InterPro" id="IPR036320">
    <property type="entry name" value="Glycosyl_Trfase_fam3_N_dom_sf"/>
</dbReference>
<dbReference type="InterPro" id="IPR035902">
    <property type="entry name" value="Nuc_phospho_transferase"/>
</dbReference>
<dbReference type="NCBIfam" id="TIGR01245">
    <property type="entry name" value="trpD"/>
    <property type="match status" value="1"/>
</dbReference>
<dbReference type="PANTHER" id="PTHR43285">
    <property type="entry name" value="ANTHRANILATE PHOSPHORIBOSYLTRANSFERASE"/>
    <property type="match status" value="1"/>
</dbReference>
<dbReference type="PANTHER" id="PTHR43285:SF2">
    <property type="entry name" value="ANTHRANILATE PHOSPHORIBOSYLTRANSFERASE"/>
    <property type="match status" value="1"/>
</dbReference>
<dbReference type="Pfam" id="PF02885">
    <property type="entry name" value="Glycos_trans_3N"/>
    <property type="match status" value="1"/>
</dbReference>
<dbReference type="Pfam" id="PF00591">
    <property type="entry name" value="Glycos_transf_3"/>
    <property type="match status" value="1"/>
</dbReference>
<dbReference type="SUPFAM" id="SSF52418">
    <property type="entry name" value="Nucleoside phosphorylase/phosphoribosyltransferase catalytic domain"/>
    <property type="match status" value="1"/>
</dbReference>
<dbReference type="SUPFAM" id="SSF47648">
    <property type="entry name" value="Nucleoside phosphorylase/phosphoribosyltransferase N-terminal domain"/>
    <property type="match status" value="1"/>
</dbReference>
<sequence>MIETAIAQLTNQENLDFTMSQQVITEIMKGQATDAQIGSFLTALAIKKATIDEIAGAATAMRSQALPFKVKRPTLEIVGTGGDRSNSFNISTTTALVVAAAGVPVTKHGNRAASSKSGAADVLEALGIKIDLTPAQSLALLERTNFAFMYAREYHQAMRFVAPARQQIKIPTIFNILGPLANPAHAEMQLLGVYRQALMAPLAEVLTRLGVKHAMVVHSRDGLDEISAAAPTDVIVINHGQQVTRILTPEQFGLTRCDHAALIGGSAQVNAAITRAVLTGEPGAPRDVVLMNAAAALHIAKPQLDLAAAFELAQQTIDQGAAAAKLAQLIQSSQAVMAS</sequence>
<comment type="function">
    <text evidence="1">Catalyzes the transfer of the phosphoribosyl group of 5-phosphorylribose-1-pyrophosphate (PRPP) to anthranilate to yield N-(5'-phosphoribosyl)-anthranilate (PRA).</text>
</comment>
<comment type="catalytic activity">
    <reaction evidence="1">
        <text>N-(5-phospho-beta-D-ribosyl)anthranilate + diphosphate = 5-phospho-alpha-D-ribose 1-diphosphate + anthranilate</text>
        <dbReference type="Rhea" id="RHEA:11768"/>
        <dbReference type="ChEBI" id="CHEBI:16567"/>
        <dbReference type="ChEBI" id="CHEBI:18277"/>
        <dbReference type="ChEBI" id="CHEBI:33019"/>
        <dbReference type="ChEBI" id="CHEBI:58017"/>
        <dbReference type="EC" id="2.4.2.18"/>
    </reaction>
</comment>
<comment type="cofactor">
    <cofactor evidence="1">
        <name>Mg(2+)</name>
        <dbReference type="ChEBI" id="CHEBI:18420"/>
    </cofactor>
    <text evidence="1">Binds 2 magnesium ions per monomer.</text>
</comment>
<comment type="pathway">
    <text evidence="1">Amino-acid biosynthesis; L-tryptophan biosynthesis; L-tryptophan from chorismate: step 2/5.</text>
</comment>
<comment type="subunit">
    <text evidence="1">Homodimer.</text>
</comment>
<comment type="similarity">
    <text evidence="1">Belongs to the anthranilate phosphoribosyltransferase family.</text>
</comment>
<name>TRPD_LACPL</name>